<gene>
    <name evidence="1" type="primary">leuD</name>
    <name type="ordered locus">ABC2639</name>
</gene>
<organism>
    <name type="scientific">Shouchella clausii (strain KSM-K16)</name>
    <name type="common">Alkalihalobacillus clausii</name>
    <dbReference type="NCBI Taxonomy" id="66692"/>
    <lineage>
        <taxon>Bacteria</taxon>
        <taxon>Bacillati</taxon>
        <taxon>Bacillota</taxon>
        <taxon>Bacilli</taxon>
        <taxon>Bacillales</taxon>
        <taxon>Bacillaceae</taxon>
        <taxon>Shouchella</taxon>
    </lineage>
</organism>
<evidence type="ECO:0000255" key="1">
    <source>
        <dbReference type="HAMAP-Rule" id="MF_01031"/>
    </source>
</evidence>
<feature type="chain" id="PRO_0000141780" description="3-isopropylmalate dehydratase small subunit">
    <location>
        <begin position="1"/>
        <end position="197"/>
    </location>
</feature>
<name>LEUD_SHOC1</name>
<protein>
    <recommendedName>
        <fullName evidence="1">3-isopropylmalate dehydratase small subunit</fullName>
        <ecNumber evidence="1">4.2.1.33</ecNumber>
    </recommendedName>
    <alternativeName>
        <fullName evidence="1">Alpha-IPM isomerase</fullName>
        <shortName evidence="1">IPMI</shortName>
    </alternativeName>
    <alternativeName>
        <fullName evidence="1">Isopropylmalate isomerase</fullName>
    </alternativeName>
</protein>
<keyword id="KW-0028">Amino-acid biosynthesis</keyword>
<keyword id="KW-0100">Branched-chain amino acid biosynthesis</keyword>
<keyword id="KW-0432">Leucine biosynthesis</keyword>
<keyword id="KW-0456">Lyase</keyword>
<keyword id="KW-1185">Reference proteome</keyword>
<comment type="function">
    <text evidence="1">Catalyzes the isomerization between 2-isopropylmalate and 3-isopropylmalate, via the formation of 2-isopropylmaleate.</text>
</comment>
<comment type="catalytic activity">
    <reaction evidence="1">
        <text>(2R,3S)-3-isopropylmalate = (2S)-2-isopropylmalate</text>
        <dbReference type="Rhea" id="RHEA:32287"/>
        <dbReference type="ChEBI" id="CHEBI:1178"/>
        <dbReference type="ChEBI" id="CHEBI:35121"/>
        <dbReference type="EC" id="4.2.1.33"/>
    </reaction>
</comment>
<comment type="pathway">
    <text evidence="1">Amino-acid biosynthesis; L-leucine biosynthesis; L-leucine from 3-methyl-2-oxobutanoate: step 2/4.</text>
</comment>
<comment type="subunit">
    <text evidence="1">Heterodimer of LeuC and LeuD.</text>
</comment>
<comment type="similarity">
    <text evidence="1">Belongs to the LeuD family. LeuD type 1 subfamily.</text>
</comment>
<dbReference type="EC" id="4.2.1.33" evidence="1"/>
<dbReference type="EMBL" id="AP006627">
    <property type="protein sequence ID" value="BAD65174.1"/>
    <property type="molecule type" value="Genomic_DNA"/>
</dbReference>
<dbReference type="RefSeq" id="WP_011247482.1">
    <property type="nucleotide sequence ID" value="NC_006582.1"/>
</dbReference>
<dbReference type="SMR" id="Q5WEN6"/>
<dbReference type="STRING" id="66692.ABC2639"/>
<dbReference type="KEGG" id="bcl:ABC2639"/>
<dbReference type="eggNOG" id="COG0066">
    <property type="taxonomic scope" value="Bacteria"/>
</dbReference>
<dbReference type="HOGENOM" id="CLU_081378_0_3_9"/>
<dbReference type="OrthoDB" id="9777465at2"/>
<dbReference type="UniPathway" id="UPA00048">
    <property type="reaction ID" value="UER00071"/>
</dbReference>
<dbReference type="Proteomes" id="UP000001168">
    <property type="component" value="Chromosome"/>
</dbReference>
<dbReference type="GO" id="GO:0009316">
    <property type="term" value="C:3-isopropylmalate dehydratase complex"/>
    <property type="evidence" value="ECO:0007669"/>
    <property type="project" value="InterPro"/>
</dbReference>
<dbReference type="GO" id="GO:0003861">
    <property type="term" value="F:3-isopropylmalate dehydratase activity"/>
    <property type="evidence" value="ECO:0007669"/>
    <property type="project" value="UniProtKB-UniRule"/>
</dbReference>
<dbReference type="GO" id="GO:0009098">
    <property type="term" value="P:L-leucine biosynthetic process"/>
    <property type="evidence" value="ECO:0007669"/>
    <property type="project" value="UniProtKB-UniRule"/>
</dbReference>
<dbReference type="CDD" id="cd01577">
    <property type="entry name" value="IPMI_Swivel"/>
    <property type="match status" value="1"/>
</dbReference>
<dbReference type="FunFam" id="3.20.19.10:FF:000003">
    <property type="entry name" value="3-isopropylmalate dehydratase small subunit"/>
    <property type="match status" value="1"/>
</dbReference>
<dbReference type="Gene3D" id="3.20.19.10">
    <property type="entry name" value="Aconitase, domain 4"/>
    <property type="match status" value="1"/>
</dbReference>
<dbReference type="HAMAP" id="MF_01031">
    <property type="entry name" value="LeuD_type1"/>
    <property type="match status" value="1"/>
</dbReference>
<dbReference type="InterPro" id="IPR004431">
    <property type="entry name" value="3-IsopropMal_deHydase_ssu"/>
</dbReference>
<dbReference type="InterPro" id="IPR015928">
    <property type="entry name" value="Aconitase/3IPM_dehydase_swvl"/>
</dbReference>
<dbReference type="InterPro" id="IPR000573">
    <property type="entry name" value="AconitaseA/IPMdHydase_ssu_swvl"/>
</dbReference>
<dbReference type="InterPro" id="IPR033940">
    <property type="entry name" value="IPMI_Swivel"/>
</dbReference>
<dbReference type="InterPro" id="IPR050075">
    <property type="entry name" value="LeuD"/>
</dbReference>
<dbReference type="NCBIfam" id="TIGR00171">
    <property type="entry name" value="leuD"/>
    <property type="match status" value="1"/>
</dbReference>
<dbReference type="NCBIfam" id="NF002458">
    <property type="entry name" value="PRK01641.1"/>
    <property type="match status" value="1"/>
</dbReference>
<dbReference type="PANTHER" id="PTHR43345:SF5">
    <property type="entry name" value="3-ISOPROPYLMALATE DEHYDRATASE SMALL SUBUNIT"/>
    <property type="match status" value="1"/>
</dbReference>
<dbReference type="PANTHER" id="PTHR43345">
    <property type="entry name" value="3-ISOPROPYLMALATE DEHYDRATASE SMALL SUBUNIT 2-RELATED-RELATED"/>
    <property type="match status" value="1"/>
</dbReference>
<dbReference type="Pfam" id="PF00694">
    <property type="entry name" value="Aconitase_C"/>
    <property type="match status" value="1"/>
</dbReference>
<dbReference type="SUPFAM" id="SSF52016">
    <property type="entry name" value="LeuD/IlvD-like"/>
    <property type="match status" value="1"/>
</dbReference>
<sequence length="197" mass="22789">MEPIQVHKGKAVVLDRVNIDTDQIIPKQFLKRVERTGFGQYLFYDWRFQADGADNPAFELNQPEANGASILITGHNFGCGSSREHAPWALYDYGFRVIIAPSFADIFYNNCVKNGLLPIRLSPEETELWMERAKESQEEITVDLGEQLIKQNGLETKFEMDSYWKQMLYNGWDEISLTLQYEEAIAKYEHRQSAVNK</sequence>
<reference key="1">
    <citation type="submission" date="2003-10" db="EMBL/GenBank/DDBJ databases">
        <title>The complete genome sequence of the alkaliphilic Bacillus clausii KSM-K16.</title>
        <authorList>
            <person name="Takaki Y."/>
            <person name="Kageyama Y."/>
            <person name="Shimamura S."/>
            <person name="Suzuki H."/>
            <person name="Nishi S."/>
            <person name="Hatada Y."/>
            <person name="Kawai S."/>
            <person name="Ito S."/>
            <person name="Horikoshi K."/>
        </authorList>
    </citation>
    <scope>NUCLEOTIDE SEQUENCE [LARGE SCALE GENOMIC DNA]</scope>
    <source>
        <strain>KSM-K16</strain>
    </source>
</reference>
<accession>Q5WEN6</accession>
<proteinExistence type="inferred from homology"/>